<reference key="1">
    <citation type="journal article" date="2008" name="Proc. Natl. Acad. Sci. U.S.A.">
        <title>Niche adaptation and genome expansion in the chlorophyll d-producing cyanobacterium Acaryochloris marina.</title>
        <authorList>
            <person name="Swingley W.D."/>
            <person name="Chen M."/>
            <person name="Cheung P.C."/>
            <person name="Conrad A.L."/>
            <person name="Dejesa L.C."/>
            <person name="Hao J."/>
            <person name="Honchak B.M."/>
            <person name="Karbach L.E."/>
            <person name="Kurdoglu A."/>
            <person name="Lahiri S."/>
            <person name="Mastrian S.D."/>
            <person name="Miyashita H."/>
            <person name="Page L."/>
            <person name="Ramakrishna P."/>
            <person name="Satoh S."/>
            <person name="Sattley W.M."/>
            <person name="Shimada Y."/>
            <person name="Taylor H.L."/>
            <person name="Tomo T."/>
            <person name="Tsuchiya T."/>
            <person name="Wang Z.T."/>
            <person name="Raymond J."/>
            <person name="Mimuro M."/>
            <person name="Blankenship R.E."/>
            <person name="Touchman J.W."/>
        </authorList>
    </citation>
    <scope>NUCLEOTIDE SEQUENCE [LARGE SCALE GENOMIC DNA]</scope>
    <source>
        <strain>MBIC 11017</strain>
    </source>
</reference>
<gene>
    <name evidence="1" type="primary">lspA</name>
    <name type="ordered locus">AM1_3652</name>
</gene>
<accession>B0C3E3</accession>
<proteinExistence type="inferred from homology"/>
<keyword id="KW-0064">Aspartyl protease</keyword>
<keyword id="KW-0997">Cell inner membrane</keyword>
<keyword id="KW-1003">Cell membrane</keyword>
<keyword id="KW-0378">Hydrolase</keyword>
<keyword id="KW-0472">Membrane</keyword>
<keyword id="KW-0645">Protease</keyword>
<keyword id="KW-1185">Reference proteome</keyword>
<keyword id="KW-0812">Transmembrane</keyword>
<keyword id="KW-1133">Transmembrane helix</keyword>
<sequence length="165" mass="18544">MRWKKLLFWGSALLSVGADQLTKFWVTQNFELRRPPAQPDTWPLIQNVFHFTYVTNDGAAFSLFKDSPLLPWLSFLVCLGLIGLGLFGPRFPQWEQAGYGFLLGGAAGNGIDRIFLGEVIDFLDFRLIQFPVFNIADISINVGLACLIFATWQSSRKGSRKTPTP</sequence>
<protein>
    <recommendedName>
        <fullName evidence="1">Lipoprotein signal peptidase</fullName>
        <ecNumber evidence="1">3.4.23.36</ecNumber>
    </recommendedName>
    <alternativeName>
        <fullName evidence="1">Prolipoprotein signal peptidase</fullName>
    </alternativeName>
    <alternativeName>
        <fullName evidence="1">Signal peptidase II</fullName>
        <shortName evidence="1">SPase II</shortName>
    </alternativeName>
</protein>
<organism>
    <name type="scientific">Acaryochloris marina (strain MBIC 11017)</name>
    <dbReference type="NCBI Taxonomy" id="329726"/>
    <lineage>
        <taxon>Bacteria</taxon>
        <taxon>Bacillati</taxon>
        <taxon>Cyanobacteriota</taxon>
        <taxon>Cyanophyceae</taxon>
        <taxon>Acaryochloridales</taxon>
        <taxon>Acaryochloridaceae</taxon>
        <taxon>Acaryochloris</taxon>
    </lineage>
</organism>
<name>LSPA_ACAM1</name>
<feature type="chain" id="PRO_1000076913" description="Lipoprotein signal peptidase">
    <location>
        <begin position="1"/>
        <end position="165"/>
    </location>
</feature>
<feature type="transmembrane region" description="Helical" evidence="1">
    <location>
        <begin position="68"/>
        <end position="88"/>
    </location>
</feature>
<feature type="transmembrane region" description="Helical" evidence="1">
    <location>
        <begin position="100"/>
        <end position="120"/>
    </location>
</feature>
<feature type="transmembrane region" description="Helical" evidence="1">
    <location>
        <begin position="130"/>
        <end position="150"/>
    </location>
</feature>
<feature type="active site" evidence="1">
    <location>
        <position position="121"/>
    </location>
</feature>
<feature type="active site" evidence="1">
    <location>
        <position position="137"/>
    </location>
</feature>
<comment type="function">
    <text evidence="1">This protein specifically catalyzes the removal of signal peptides from prolipoproteins.</text>
</comment>
<comment type="catalytic activity">
    <reaction evidence="1">
        <text>Release of signal peptides from bacterial membrane prolipoproteins. Hydrolyzes -Xaa-Yaa-Zaa-|-(S,diacylglyceryl)Cys-, in which Xaa is hydrophobic (preferably Leu), and Yaa (Ala or Ser) and Zaa (Gly or Ala) have small, neutral side chains.</text>
        <dbReference type="EC" id="3.4.23.36"/>
    </reaction>
</comment>
<comment type="pathway">
    <text evidence="1">Protein modification; lipoprotein biosynthesis (signal peptide cleavage).</text>
</comment>
<comment type="subcellular location">
    <subcellularLocation>
        <location evidence="1">Cell inner membrane</location>
        <topology evidence="1">Multi-pass membrane protein</topology>
    </subcellularLocation>
</comment>
<comment type="similarity">
    <text evidence="1">Belongs to the peptidase A8 family.</text>
</comment>
<dbReference type="EC" id="3.4.23.36" evidence="1"/>
<dbReference type="EMBL" id="CP000828">
    <property type="protein sequence ID" value="ABW28642.1"/>
    <property type="molecule type" value="Genomic_DNA"/>
</dbReference>
<dbReference type="RefSeq" id="WP_012164032.1">
    <property type="nucleotide sequence ID" value="NC_009925.1"/>
</dbReference>
<dbReference type="SMR" id="B0C3E3"/>
<dbReference type="STRING" id="329726.AM1_3652"/>
<dbReference type="KEGG" id="amr:AM1_3652"/>
<dbReference type="eggNOG" id="COG0597">
    <property type="taxonomic scope" value="Bacteria"/>
</dbReference>
<dbReference type="HOGENOM" id="CLU_083252_3_2_3"/>
<dbReference type="OrthoDB" id="9810259at2"/>
<dbReference type="UniPathway" id="UPA00665"/>
<dbReference type="Proteomes" id="UP000000268">
    <property type="component" value="Chromosome"/>
</dbReference>
<dbReference type="GO" id="GO:0005886">
    <property type="term" value="C:plasma membrane"/>
    <property type="evidence" value="ECO:0007669"/>
    <property type="project" value="UniProtKB-SubCell"/>
</dbReference>
<dbReference type="GO" id="GO:0004190">
    <property type="term" value="F:aspartic-type endopeptidase activity"/>
    <property type="evidence" value="ECO:0007669"/>
    <property type="project" value="UniProtKB-UniRule"/>
</dbReference>
<dbReference type="GO" id="GO:0006508">
    <property type="term" value="P:proteolysis"/>
    <property type="evidence" value="ECO:0007669"/>
    <property type="project" value="UniProtKB-KW"/>
</dbReference>
<dbReference type="HAMAP" id="MF_00161">
    <property type="entry name" value="LspA"/>
    <property type="match status" value="1"/>
</dbReference>
<dbReference type="InterPro" id="IPR001872">
    <property type="entry name" value="Peptidase_A8"/>
</dbReference>
<dbReference type="NCBIfam" id="TIGR00077">
    <property type="entry name" value="lspA"/>
    <property type="match status" value="1"/>
</dbReference>
<dbReference type="PANTHER" id="PTHR33695">
    <property type="entry name" value="LIPOPROTEIN SIGNAL PEPTIDASE"/>
    <property type="match status" value="1"/>
</dbReference>
<dbReference type="PANTHER" id="PTHR33695:SF1">
    <property type="entry name" value="LIPOPROTEIN SIGNAL PEPTIDASE"/>
    <property type="match status" value="1"/>
</dbReference>
<dbReference type="Pfam" id="PF01252">
    <property type="entry name" value="Peptidase_A8"/>
    <property type="match status" value="1"/>
</dbReference>
<dbReference type="PRINTS" id="PR00781">
    <property type="entry name" value="LIPOSIGPTASE"/>
</dbReference>
<evidence type="ECO:0000255" key="1">
    <source>
        <dbReference type="HAMAP-Rule" id="MF_00161"/>
    </source>
</evidence>